<feature type="chain" id="PRO_0000318786" description="Bifunctional protein FolD">
    <location>
        <begin position="1"/>
        <end position="291"/>
    </location>
</feature>
<feature type="binding site" evidence="1">
    <location>
        <begin position="173"/>
        <end position="175"/>
    </location>
    <ligand>
        <name>NADP(+)</name>
        <dbReference type="ChEBI" id="CHEBI:58349"/>
    </ligand>
</feature>
<feature type="binding site" evidence="1">
    <location>
        <position position="198"/>
    </location>
    <ligand>
        <name>NADP(+)</name>
        <dbReference type="ChEBI" id="CHEBI:58349"/>
    </ligand>
</feature>
<comment type="function">
    <text evidence="1">Catalyzes the oxidation of 5,10-methylenetetrahydrofolate to 5,10-methenyltetrahydrofolate and then the hydrolysis of 5,10-methenyltetrahydrofolate to 10-formyltetrahydrofolate.</text>
</comment>
<comment type="catalytic activity">
    <reaction evidence="1">
        <text>(6R)-5,10-methylene-5,6,7,8-tetrahydrofolate + NADP(+) = (6R)-5,10-methenyltetrahydrofolate + NADPH</text>
        <dbReference type="Rhea" id="RHEA:22812"/>
        <dbReference type="ChEBI" id="CHEBI:15636"/>
        <dbReference type="ChEBI" id="CHEBI:57455"/>
        <dbReference type="ChEBI" id="CHEBI:57783"/>
        <dbReference type="ChEBI" id="CHEBI:58349"/>
        <dbReference type="EC" id="1.5.1.5"/>
    </reaction>
</comment>
<comment type="catalytic activity">
    <reaction evidence="1">
        <text>(6R)-5,10-methenyltetrahydrofolate + H2O = (6R)-10-formyltetrahydrofolate + H(+)</text>
        <dbReference type="Rhea" id="RHEA:23700"/>
        <dbReference type="ChEBI" id="CHEBI:15377"/>
        <dbReference type="ChEBI" id="CHEBI:15378"/>
        <dbReference type="ChEBI" id="CHEBI:57455"/>
        <dbReference type="ChEBI" id="CHEBI:195366"/>
        <dbReference type="EC" id="3.5.4.9"/>
    </reaction>
</comment>
<comment type="pathway">
    <text evidence="1">One-carbon metabolism; tetrahydrofolate interconversion.</text>
</comment>
<comment type="subunit">
    <text evidence="1">Homodimer.</text>
</comment>
<comment type="similarity">
    <text evidence="1">Belongs to the tetrahydrofolate dehydrogenase/cyclohydrolase family.</text>
</comment>
<evidence type="ECO:0000255" key="1">
    <source>
        <dbReference type="HAMAP-Rule" id="MF_01576"/>
    </source>
</evidence>
<organism>
    <name type="scientific">Psychrobacter sp. (strain PRwf-1)</name>
    <dbReference type="NCBI Taxonomy" id="349106"/>
    <lineage>
        <taxon>Bacteria</taxon>
        <taxon>Pseudomonadati</taxon>
        <taxon>Pseudomonadota</taxon>
        <taxon>Gammaproteobacteria</taxon>
        <taxon>Moraxellales</taxon>
        <taxon>Moraxellaceae</taxon>
        <taxon>Psychrobacter</taxon>
    </lineage>
</organism>
<reference key="1">
    <citation type="submission" date="2007-05" db="EMBL/GenBank/DDBJ databases">
        <title>Complete sequence of chromosome of Psychrobacter sp. PRwf-1.</title>
        <authorList>
            <consortium name="US DOE Joint Genome Institute"/>
            <person name="Copeland A."/>
            <person name="Lucas S."/>
            <person name="Lapidus A."/>
            <person name="Barry K."/>
            <person name="Detter J.C."/>
            <person name="Glavina del Rio T."/>
            <person name="Hammon N."/>
            <person name="Israni S."/>
            <person name="Dalin E."/>
            <person name="Tice H."/>
            <person name="Pitluck S."/>
            <person name="Chain P."/>
            <person name="Malfatti S."/>
            <person name="Shin M."/>
            <person name="Vergez L."/>
            <person name="Schmutz J."/>
            <person name="Larimer F."/>
            <person name="Land M."/>
            <person name="Hauser L."/>
            <person name="Kyrpides N."/>
            <person name="Kim E."/>
            <person name="Tiedje J."/>
            <person name="Richardson P."/>
        </authorList>
    </citation>
    <scope>NUCLEOTIDE SEQUENCE [LARGE SCALE GENOMIC DNA]</scope>
    <source>
        <strain>PRwf-1</strain>
    </source>
</reference>
<keyword id="KW-0028">Amino-acid biosynthesis</keyword>
<keyword id="KW-0368">Histidine biosynthesis</keyword>
<keyword id="KW-0378">Hydrolase</keyword>
<keyword id="KW-0486">Methionine biosynthesis</keyword>
<keyword id="KW-0511">Multifunctional enzyme</keyword>
<keyword id="KW-0521">NADP</keyword>
<keyword id="KW-0554">One-carbon metabolism</keyword>
<keyword id="KW-0560">Oxidoreductase</keyword>
<keyword id="KW-0658">Purine biosynthesis</keyword>
<protein>
    <recommendedName>
        <fullName evidence="1">Bifunctional protein FolD</fullName>
    </recommendedName>
    <domain>
        <recommendedName>
            <fullName evidence="1">Methylenetetrahydrofolate dehydrogenase</fullName>
            <ecNumber evidence="1">1.5.1.5</ecNumber>
        </recommendedName>
    </domain>
    <domain>
        <recommendedName>
            <fullName evidence="1">Methenyltetrahydrofolate cyclohydrolase</fullName>
            <ecNumber evidence="1">3.5.4.9</ecNumber>
        </recommendedName>
    </domain>
</protein>
<name>FOLD_PSYWF</name>
<gene>
    <name evidence="1" type="primary">folD</name>
    <name type="ordered locus">PsycPRwf_1815</name>
</gene>
<sequence>MNDATATRLDGKALAKQIETELSQRVAAVIKKTGRTPILATILVGDDPASATYVRMKGNACKRVGMESIRVEMPASTTTEQLLAKIDELNNNPDVHGILLQHPVPEQIDERACFDAIDLNKDVDGVTSLGFGRMSMGEPAYGSCTPQGIMYLLERYFLKNGIEFAGKNAVVVGRSAILGKPMAQMLLNANCTVTICHSKTQNLEEHVGRADILVGAVGVPELIKKDWIKPGAIVVDAGFHPTEDGGVGDIELKGIESIAAAYTPVPGGVGPMTINTLIRQTVEAAEKAAQA</sequence>
<proteinExistence type="inferred from homology"/>
<dbReference type="EC" id="1.5.1.5" evidence="1"/>
<dbReference type="EC" id="3.5.4.9" evidence="1"/>
<dbReference type="EMBL" id="CP000713">
    <property type="protein sequence ID" value="ABQ94755.1"/>
    <property type="molecule type" value="Genomic_DNA"/>
</dbReference>
<dbReference type="SMR" id="A5WGG4"/>
<dbReference type="STRING" id="349106.PsycPRwf_1815"/>
<dbReference type="KEGG" id="prw:PsycPRwf_1815"/>
<dbReference type="eggNOG" id="COG0190">
    <property type="taxonomic scope" value="Bacteria"/>
</dbReference>
<dbReference type="HOGENOM" id="CLU_034045_1_2_6"/>
<dbReference type="UniPathway" id="UPA00193"/>
<dbReference type="GO" id="GO:0005829">
    <property type="term" value="C:cytosol"/>
    <property type="evidence" value="ECO:0007669"/>
    <property type="project" value="TreeGrafter"/>
</dbReference>
<dbReference type="GO" id="GO:0004477">
    <property type="term" value="F:methenyltetrahydrofolate cyclohydrolase activity"/>
    <property type="evidence" value="ECO:0007669"/>
    <property type="project" value="UniProtKB-UniRule"/>
</dbReference>
<dbReference type="GO" id="GO:0004488">
    <property type="term" value="F:methylenetetrahydrofolate dehydrogenase (NADP+) activity"/>
    <property type="evidence" value="ECO:0007669"/>
    <property type="project" value="UniProtKB-UniRule"/>
</dbReference>
<dbReference type="GO" id="GO:0000105">
    <property type="term" value="P:L-histidine biosynthetic process"/>
    <property type="evidence" value="ECO:0007669"/>
    <property type="project" value="UniProtKB-KW"/>
</dbReference>
<dbReference type="GO" id="GO:0009086">
    <property type="term" value="P:methionine biosynthetic process"/>
    <property type="evidence" value="ECO:0007669"/>
    <property type="project" value="UniProtKB-KW"/>
</dbReference>
<dbReference type="GO" id="GO:0006164">
    <property type="term" value="P:purine nucleotide biosynthetic process"/>
    <property type="evidence" value="ECO:0007669"/>
    <property type="project" value="UniProtKB-KW"/>
</dbReference>
<dbReference type="GO" id="GO:0035999">
    <property type="term" value="P:tetrahydrofolate interconversion"/>
    <property type="evidence" value="ECO:0007669"/>
    <property type="project" value="UniProtKB-UniRule"/>
</dbReference>
<dbReference type="CDD" id="cd01080">
    <property type="entry name" value="NAD_bind_m-THF_DH_Cyclohyd"/>
    <property type="match status" value="1"/>
</dbReference>
<dbReference type="FunFam" id="3.40.50.720:FF:000094">
    <property type="entry name" value="Bifunctional protein FolD"/>
    <property type="match status" value="1"/>
</dbReference>
<dbReference type="FunFam" id="3.40.50.10860:FF:000005">
    <property type="entry name" value="C-1-tetrahydrofolate synthase, cytoplasmic, putative"/>
    <property type="match status" value="1"/>
</dbReference>
<dbReference type="Gene3D" id="3.40.50.10860">
    <property type="entry name" value="Leucine Dehydrogenase, chain A, domain 1"/>
    <property type="match status" value="1"/>
</dbReference>
<dbReference type="Gene3D" id="3.40.50.720">
    <property type="entry name" value="NAD(P)-binding Rossmann-like Domain"/>
    <property type="match status" value="1"/>
</dbReference>
<dbReference type="HAMAP" id="MF_01576">
    <property type="entry name" value="THF_DHG_CYH"/>
    <property type="match status" value="1"/>
</dbReference>
<dbReference type="InterPro" id="IPR046346">
    <property type="entry name" value="Aminoacid_DH-like_N_sf"/>
</dbReference>
<dbReference type="InterPro" id="IPR036291">
    <property type="entry name" value="NAD(P)-bd_dom_sf"/>
</dbReference>
<dbReference type="InterPro" id="IPR000672">
    <property type="entry name" value="THF_DH/CycHdrlase"/>
</dbReference>
<dbReference type="InterPro" id="IPR020630">
    <property type="entry name" value="THF_DH/CycHdrlase_cat_dom"/>
</dbReference>
<dbReference type="InterPro" id="IPR020867">
    <property type="entry name" value="THF_DH/CycHdrlase_CS"/>
</dbReference>
<dbReference type="InterPro" id="IPR020631">
    <property type="entry name" value="THF_DH/CycHdrlase_NAD-bd_dom"/>
</dbReference>
<dbReference type="NCBIfam" id="NF010788">
    <property type="entry name" value="PRK14192.1"/>
    <property type="match status" value="1"/>
</dbReference>
<dbReference type="PANTHER" id="PTHR48099:SF5">
    <property type="entry name" value="C-1-TETRAHYDROFOLATE SYNTHASE, CYTOPLASMIC"/>
    <property type="match status" value="1"/>
</dbReference>
<dbReference type="PANTHER" id="PTHR48099">
    <property type="entry name" value="C-1-TETRAHYDROFOLATE SYNTHASE, CYTOPLASMIC-RELATED"/>
    <property type="match status" value="1"/>
</dbReference>
<dbReference type="Pfam" id="PF00763">
    <property type="entry name" value="THF_DHG_CYH"/>
    <property type="match status" value="1"/>
</dbReference>
<dbReference type="Pfam" id="PF02882">
    <property type="entry name" value="THF_DHG_CYH_C"/>
    <property type="match status" value="1"/>
</dbReference>
<dbReference type="PRINTS" id="PR00085">
    <property type="entry name" value="THFDHDRGNASE"/>
</dbReference>
<dbReference type="SUPFAM" id="SSF53223">
    <property type="entry name" value="Aminoacid dehydrogenase-like, N-terminal domain"/>
    <property type="match status" value="1"/>
</dbReference>
<dbReference type="SUPFAM" id="SSF51735">
    <property type="entry name" value="NAD(P)-binding Rossmann-fold domains"/>
    <property type="match status" value="1"/>
</dbReference>
<dbReference type="PROSITE" id="PS00767">
    <property type="entry name" value="THF_DHG_CYH_2"/>
    <property type="match status" value="1"/>
</dbReference>
<accession>A5WGG4</accession>